<dbReference type="EMBL" id="AE008384">
    <property type="protein sequence ID" value="AAM31451.1"/>
    <property type="molecule type" value="Genomic_DNA"/>
</dbReference>
<dbReference type="RefSeq" id="WP_011033695.1">
    <property type="nucleotide sequence ID" value="NC_003901.1"/>
</dbReference>
<dbReference type="SMR" id="Q8PW46"/>
<dbReference type="KEGG" id="mma:MM_1755"/>
<dbReference type="PATRIC" id="fig|192952.21.peg.2031"/>
<dbReference type="eggNOG" id="arCOG00780">
    <property type="taxonomic scope" value="Archaea"/>
</dbReference>
<dbReference type="HOGENOM" id="CLU_146465_0_0_2"/>
<dbReference type="Proteomes" id="UP000000595">
    <property type="component" value="Chromosome"/>
</dbReference>
<dbReference type="GO" id="GO:0022625">
    <property type="term" value="C:cytosolic large ribosomal subunit"/>
    <property type="evidence" value="ECO:0007669"/>
    <property type="project" value="TreeGrafter"/>
</dbReference>
<dbReference type="GO" id="GO:0003723">
    <property type="term" value="F:RNA binding"/>
    <property type="evidence" value="ECO:0007669"/>
    <property type="project" value="TreeGrafter"/>
</dbReference>
<dbReference type="GO" id="GO:0003735">
    <property type="term" value="F:structural constituent of ribosome"/>
    <property type="evidence" value="ECO:0007669"/>
    <property type="project" value="InterPro"/>
</dbReference>
<dbReference type="GO" id="GO:0006412">
    <property type="term" value="P:translation"/>
    <property type="evidence" value="ECO:0007669"/>
    <property type="project" value="UniProtKB-UniRule"/>
</dbReference>
<dbReference type="FunFam" id="3.100.10.10:FF:000013">
    <property type="entry name" value="50S ribosomal protein L18e"/>
    <property type="match status" value="1"/>
</dbReference>
<dbReference type="Gene3D" id="3.100.10.10">
    <property type="match status" value="1"/>
</dbReference>
<dbReference type="HAMAP" id="MF_00329">
    <property type="entry name" value="Ribosomal_eL18"/>
    <property type="match status" value="1"/>
</dbReference>
<dbReference type="InterPro" id="IPR000039">
    <property type="entry name" value="Ribosomal_eL18"/>
</dbReference>
<dbReference type="InterPro" id="IPR021132">
    <property type="entry name" value="Ribosomal_eL18/eL18-A/B/_CS"/>
</dbReference>
<dbReference type="InterPro" id="IPR022947">
    <property type="entry name" value="Ribosomal_eL18_arc"/>
</dbReference>
<dbReference type="InterPro" id="IPR021131">
    <property type="entry name" value="Ribosomal_uL15/eL18"/>
</dbReference>
<dbReference type="InterPro" id="IPR036227">
    <property type="entry name" value="Ribosomal_uL15/eL18_sf"/>
</dbReference>
<dbReference type="InterPro" id="IPR001196">
    <property type="entry name" value="Ribosomal_uL15_CS"/>
</dbReference>
<dbReference type="NCBIfam" id="NF003079">
    <property type="entry name" value="PRK04005.1"/>
    <property type="match status" value="1"/>
</dbReference>
<dbReference type="PANTHER" id="PTHR10934">
    <property type="entry name" value="60S RIBOSOMAL PROTEIN L18"/>
    <property type="match status" value="1"/>
</dbReference>
<dbReference type="PANTHER" id="PTHR10934:SF2">
    <property type="entry name" value="LARGE RIBOSOMAL SUBUNIT PROTEIN EL18"/>
    <property type="match status" value="1"/>
</dbReference>
<dbReference type="Pfam" id="PF00828">
    <property type="entry name" value="Ribosomal_L27A"/>
    <property type="match status" value="1"/>
</dbReference>
<dbReference type="SUPFAM" id="SSF52080">
    <property type="entry name" value="Ribosomal proteins L15p and L18e"/>
    <property type="match status" value="1"/>
</dbReference>
<dbReference type="PROSITE" id="PS01106">
    <property type="entry name" value="RIBOSOMAL_L18E"/>
    <property type="match status" value="1"/>
</dbReference>
<gene>
    <name evidence="1" type="primary">rpl18e</name>
    <name type="ordered locus">MM_1755</name>
</gene>
<name>RL18E_METMA</name>
<feature type="chain" id="PRO_0000132792" description="Large ribosomal subunit protein eL18">
    <location>
        <begin position="1"/>
        <end position="126"/>
    </location>
</feature>
<protein>
    <recommendedName>
        <fullName evidence="1">Large ribosomal subunit protein eL18</fullName>
    </recommendedName>
    <alternativeName>
        <fullName evidence="2">50S ribosomal protein L18e</fullName>
    </alternativeName>
</protein>
<sequence length="126" mass="13630">MGKKSLVKLTRKTNPRIVSLILTLKDRANVDSAPIWKDIAKRLEAPSRNYAAVNISKINRHTAENDVLLVPGKVLGAGLLDHPVTVAAVTFSESAVEKITEAGGKCLSVEEIMEANPKGSGIRIFR</sequence>
<keyword id="KW-0687">Ribonucleoprotein</keyword>
<keyword id="KW-0689">Ribosomal protein</keyword>
<reference key="1">
    <citation type="journal article" date="2002" name="J. Mol. Microbiol. Biotechnol.">
        <title>The genome of Methanosarcina mazei: evidence for lateral gene transfer between Bacteria and Archaea.</title>
        <authorList>
            <person name="Deppenmeier U."/>
            <person name="Johann A."/>
            <person name="Hartsch T."/>
            <person name="Merkl R."/>
            <person name="Schmitz R.A."/>
            <person name="Martinez-Arias R."/>
            <person name="Henne A."/>
            <person name="Wiezer A."/>
            <person name="Baeumer S."/>
            <person name="Jacobi C."/>
            <person name="Brueggemann H."/>
            <person name="Lienard T."/>
            <person name="Christmann A."/>
            <person name="Boemecke M."/>
            <person name="Steckel S."/>
            <person name="Bhattacharyya A."/>
            <person name="Lykidis A."/>
            <person name="Overbeek R."/>
            <person name="Klenk H.-P."/>
            <person name="Gunsalus R.P."/>
            <person name="Fritz H.-J."/>
            <person name="Gottschalk G."/>
        </authorList>
    </citation>
    <scope>NUCLEOTIDE SEQUENCE [LARGE SCALE GENOMIC DNA]</scope>
    <source>
        <strain>ATCC BAA-159 / DSM 3647 / Goe1 / Go1 / JCM 11833 / OCM 88</strain>
    </source>
</reference>
<organism>
    <name type="scientific">Methanosarcina mazei (strain ATCC BAA-159 / DSM 3647 / Goe1 / Go1 / JCM 11833 / OCM 88)</name>
    <name type="common">Methanosarcina frisia</name>
    <dbReference type="NCBI Taxonomy" id="192952"/>
    <lineage>
        <taxon>Archaea</taxon>
        <taxon>Methanobacteriati</taxon>
        <taxon>Methanobacteriota</taxon>
        <taxon>Stenosarchaea group</taxon>
        <taxon>Methanomicrobia</taxon>
        <taxon>Methanosarcinales</taxon>
        <taxon>Methanosarcinaceae</taxon>
        <taxon>Methanosarcina</taxon>
    </lineage>
</organism>
<comment type="similarity">
    <text evidence="1">Belongs to the eukaryotic ribosomal protein eL18 family.</text>
</comment>
<evidence type="ECO:0000255" key="1">
    <source>
        <dbReference type="HAMAP-Rule" id="MF_00329"/>
    </source>
</evidence>
<evidence type="ECO:0000305" key="2"/>
<accession>Q8PW46</accession>
<proteinExistence type="inferred from homology"/>